<protein>
    <recommendedName>
        <fullName>Trifunctional NAD biosynthesis/regulator protein NadR</fullName>
    </recommendedName>
    <domain>
        <recommendedName>
            <fullName>Transcriptional regulator NadR</fullName>
        </recommendedName>
    </domain>
    <domain>
        <recommendedName>
            <fullName>Nicotinamide mononucleotide adenylyltransferase</fullName>
            <shortName>NMN adenylyltransferase</shortName>
            <shortName>NMN-AT</shortName>
            <shortName>NMNAT</shortName>
            <ecNumber evidence="3">2.7.7.1</ecNumber>
        </recommendedName>
        <alternativeName>
            <fullName>Nicotinamide ribonucleotide adenylyltransferase</fullName>
        </alternativeName>
        <alternativeName>
            <fullName>Nicotinamide-nucleotide adenylyltransferase</fullName>
        </alternativeName>
    </domain>
    <domain>
        <recommendedName>
            <fullName>Ribosylnicotinamide kinase</fullName>
            <shortName>RNK</shortName>
            <ecNumber>2.7.1.22</ecNumber>
        </recommendedName>
        <alternativeName>
            <fullName>Nicotinamide riboside kinase</fullName>
            <shortName>NRK</shortName>
            <shortName>NmR-K</shortName>
        </alternativeName>
    </domain>
</protein>
<name>NADR_ECOLI</name>
<proteinExistence type="evidence at protein level"/>
<sequence>MSSFDYLKTAIKQQGCTLQQVADASGMTKGYLSQLLNAKIKSPSAQKLEALHRFLGLEFPRQKKTIGVVFGKFYPLHTGHIYLIQRACSQVDELHIIMGFDDTRDRALFEDSAMSQQPTVPDRLRWLLQTFKYQKNIRIHAFNEEGMEPYPHGWDVWSNGIKKFMAEKGIQPDLIYTSEEADAPQYMEHLGIETVLVDPKRTFMSISGAQIRENPFRYWEYIPTEVKPFFVRTVAILGGESSGKSTLVNKLANIFNTTSAWEYGRDYVFSHLGGDEIALQYSDYDKIALGHAQYIDFAVKYANKVAFIDTDFVTTQAFCKKYEGREHPFVQALIDEYRFDLVILLENNTPWVADGLRSLGSSVDRKEFQNLLVEMLEENNIEFVRVEEEDYDSRFLRCVELVREMMGEQR</sequence>
<feature type="chain" id="PRO_0000149728" description="Trifunctional NAD biosynthesis/regulator protein NadR">
    <location>
        <begin position="1"/>
        <end position="410"/>
    </location>
</feature>
<feature type="domain" description="HTH cro/C1-type" evidence="2">
    <location>
        <begin position="7"/>
        <end position="62"/>
    </location>
</feature>
<feature type="DNA-binding region" description="H-T-H motif" evidence="4">
    <location>
        <begin position="18"/>
        <end position="37"/>
    </location>
</feature>
<feature type="region of interest" description="Nicotinamide mononucleotide adenylyltransferase">
    <location>
        <begin position="63"/>
        <end position="229"/>
    </location>
</feature>
<feature type="region of interest" description="Ribosylnicotinamide kinase">
    <location>
        <begin position="230"/>
        <end position="410"/>
    </location>
</feature>
<feature type="binding site" evidence="1">
    <location>
        <begin position="70"/>
        <end position="73"/>
    </location>
    <ligand>
        <name>NAD(+)</name>
        <dbReference type="ChEBI" id="CHEBI:57540"/>
        <label>1</label>
    </ligand>
</feature>
<feature type="binding site" evidence="1">
    <location>
        <position position="77"/>
    </location>
    <ligand>
        <name>NAD(+)</name>
        <dbReference type="ChEBI" id="CHEBI:57540"/>
        <label>1</label>
    </ligand>
</feature>
<feature type="binding site" evidence="1">
    <location>
        <position position="104"/>
    </location>
    <ligand>
        <name>NAD(+)</name>
        <dbReference type="ChEBI" id="CHEBI:57540"/>
        <label>1</label>
    </ligand>
</feature>
<feature type="binding site" evidence="1">
    <location>
        <begin position="144"/>
        <end position="157"/>
    </location>
    <ligand>
        <name>NAD(+)</name>
        <dbReference type="ChEBI" id="CHEBI:57540"/>
        <label>1</label>
    </ligand>
</feature>
<feature type="binding site" evidence="1">
    <location>
        <begin position="177"/>
        <end position="179"/>
    </location>
    <ligand>
        <name>NAD(+)</name>
        <dbReference type="ChEBI" id="CHEBI:57540"/>
        <label>1</label>
    </ligand>
</feature>
<feature type="binding site" evidence="1">
    <location>
        <begin position="204"/>
        <end position="206"/>
    </location>
    <ligand>
        <name>NAD(+)</name>
        <dbReference type="ChEBI" id="CHEBI:57540"/>
        <label>1</label>
    </ligand>
</feature>
<feature type="binding site" evidence="1">
    <location>
        <begin position="259"/>
        <end position="261"/>
    </location>
    <ligand>
        <name>NAD(+)</name>
        <dbReference type="ChEBI" id="CHEBI:57540"/>
        <label>2</label>
    </ligand>
</feature>
<feature type="binding site" evidence="1">
    <location>
        <begin position="294"/>
        <end position="297"/>
    </location>
    <ligand>
        <name>NAD(+)</name>
        <dbReference type="ChEBI" id="CHEBI:57540"/>
        <label>2</label>
    </ligand>
</feature>
<feature type="strand" evidence="5">
    <location>
        <begin position="66"/>
        <end position="70"/>
    </location>
</feature>
<feature type="helix" evidence="5">
    <location>
        <begin position="78"/>
        <end position="88"/>
    </location>
</feature>
<feature type="strand" evidence="5">
    <location>
        <begin position="91"/>
        <end position="100"/>
    </location>
</feature>
<feature type="helix" evidence="5">
    <location>
        <begin position="102"/>
        <end position="111"/>
    </location>
</feature>
<feature type="helix" evidence="5">
    <location>
        <begin position="120"/>
        <end position="130"/>
    </location>
</feature>
<feature type="turn" evidence="5">
    <location>
        <begin position="131"/>
        <end position="133"/>
    </location>
</feature>
<feature type="strand" evidence="5">
    <location>
        <begin position="137"/>
        <end position="143"/>
    </location>
</feature>
<feature type="turn" evidence="5">
    <location>
        <begin position="150"/>
        <end position="152"/>
    </location>
</feature>
<feature type="helix" evidence="5">
    <location>
        <begin position="156"/>
        <end position="168"/>
    </location>
</feature>
<feature type="strand" evidence="5">
    <location>
        <begin position="174"/>
        <end position="178"/>
    </location>
</feature>
<feature type="turn" evidence="5">
    <location>
        <begin position="180"/>
        <end position="182"/>
    </location>
</feature>
<feature type="helix" evidence="5">
    <location>
        <begin position="183"/>
        <end position="190"/>
    </location>
</feature>
<feature type="strand" evidence="5">
    <location>
        <begin position="194"/>
        <end position="196"/>
    </location>
</feature>
<feature type="helix" evidence="5">
    <location>
        <begin position="208"/>
        <end position="213"/>
    </location>
</feature>
<feature type="turn" evidence="5">
    <location>
        <begin position="215"/>
        <end position="217"/>
    </location>
</feature>
<feature type="helix" evidence="5">
    <location>
        <begin position="219"/>
        <end position="221"/>
    </location>
</feature>
<feature type="turn" evidence="5">
    <location>
        <begin position="224"/>
        <end position="226"/>
    </location>
</feature>
<feature type="helix" evidence="5">
    <location>
        <begin position="227"/>
        <end position="229"/>
    </location>
</feature>
<feature type="strand" evidence="5">
    <location>
        <begin position="232"/>
        <end position="237"/>
    </location>
</feature>
<feature type="helix" evidence="5">
    <location>
        <begin position="244"/>
        <end position="254"/>
    </location>
</feature>
<feature type="helix" evidence="5">
    <location>
        <begin position="263"/>
        <end position="272"/>
    </location>
</feature>
<feature type="helix" evidence="5">
    <location>
        <begin position="281"/>
        <end position="283"/>
    </location>
</feature>
<feature type="helix" evidence="5">
    <location>
        <begin position="284"/>
        <end position="300"/>
    </location>
</feature>
<feature type="strand" evidence="5">
    <location>
        <begin position="303"/>
        <end position="309"/>
    </location>
</feature>
<feature type="helix" evidence="5">
    <location>
        <begin position="312"/>
        <end position="323"/>
    </location>
</feature>
<feature type="helix" evidence="5">
    <location>
        <begin position="328"/>
        <end position="336"/>
    </location>
</feature>
<feature type="strand" evidence="5">
    <location>
        <begin position="340"/>
        <end position="344"/>
    </location>
</feature>
<feature type="helix" evidence="5">
    <location>
        <begin position="362"/>
        <end position="378"/>
    </location>
</feature>
<feature type="helix" evidence="5">
    <location>
        <begin position="391"/>
        <end position="406"/>
    </location>
</feature>
<reference key="1">
    <citation type="journal article" date="1995" name="Nucleic Acids Res.">
        <title>Analysis of the Escherichia coli genome VI: DNA sequence of the region from 92.8 through 100 minutes.</title>
        <authorList>
            <person name="Burland V.D."/>
            <person name="Plunkett G. III"/>
            <person name="Sofia H.J."/>
            <person name="Daniels D.L."/>
            <person name="Blattner F.R."/>
        </authorList>
    </citation>
    <scope>NUCLEOTIDE SEQUENCE [LARGE SCALE GENOMIC DNA]</scope>
    <source>
        <strain>K12 / MG1655 / ATCC 47076</strain>
    </source>
</reference>
<reference key="2">
    <citation type="journal article" date="1997" name="Science">
        <title>The complete genome sequence of Escherichia coli K-12.</title>
        <authorList>
            <person name="Blattner F.R."/>
            <person name="Plunkett G. III"/>
            <person name="Bloch C.A."/>
            <person name="Perna N.T."/>
            <person name="Burland V."/>
            <person name="Riley M."/>
            <person name="Collado-Vides J."/>
            <person name="Glasner J.D."/>
            <person name="Rode C.K."/>
            <person name="Mayhew G.F."/>
            <person name="Gregor J."/>
            <person name="Davis N.W."/>
            <person name="Kirkpatrick H.A."/>
            <person name="Goeden M.A."/>
            <person name="Rose D.J."/>
            <person name="Mau B."/>
            <person name="Shao Y."/>
        </authorList>
    </citation>
    <scope>NUCLEOTIDE SEQUENCE [LARGE SCALE GENOMIC DNA]</scope>
    <source>
        <strain>K12 / MG1655 / ATCC 47076</strain>
    </source>
</reference>
<reference key="3">
    <citation type="journal article" date="2006" name="Mol. Syst. Biol.">
        <title>Highly accurate genome sequences of Escherichia coli K-12 strains MG1655 and W3110.</title>
        <authorList>
            <person name="Hayashi K."/>
            <person name="Morooka N."/>
            <person name="Yamamoto Y."/>
            <person name="Fujita K."/>
            <person name="Isono K."/>
            <person name="Choi S."/>
            <person name="Ohtsubo E."/>
            <person name="Baba T."/>
            <person name="Wanner B.L."/>
            <person name="Mori H."/>
            <person name="Horiuchi T."/>
        </authorList>
    </citation>
    <scope>NUCLEOTIDE SEQUENCE [LARGE SCALE GENOMIC DNA]</scope>
    <source>
        <strain>K12 / W3110 / ATCC 27325 / DSM 5911</strain>
    </source>
</reference>
<reference key="4">
    <citation type="journal article" date="1992" name="Gene">
        <title>Mutational analysis of the Escherichia coli serB promoter region reveals transcriptional linkage to a downstream gene.</title>
        <authorList>
            <person name="Neuwald A.F."/>
            <person name="Berg D.E."/>
            <person name="Stauffer G.V."/>
        </authorList>
    </citation>
    <scope>NUCLEOTIDE SEQUENCE [GENOMIC DNA] OF 1-122</scope>
    <source>
        <strain>K12</strain>
    </source>
</reference>
<reference key="5">
    <citation type="unpublished observations" date="1992-07">
        <authorList>
            <person name="Rudd K.E."/>
        </authorList>
    </citation>
    <scope>IDENTIFICATION</scope>
</reference>
<reference key="6">
    <citation type="journal article" date="1999" name="J. Bacteriol.">
        <title>The Escherichia coli NadR regulator is endowed with nicotinamide mononucleotide adenylyltransferase activity.</title>
        <authorList>
            <person name="Raffaelli N."/>
            <person name="Lorenzi T."/>
            <person name="Mariani P.L."/>
            <person name="Emanuelli M."/>
            <person name="Amici A."/>
            <person name="Ruggieri S."/>
            <person name="Magni G."/>
        </authorList>
    </citation>
    <scope>FUNCTION AS NMN ADENYLYLTRANSFERASE</scope>
    <scope>CATALYTIC ACTIVITY</scope>
    <scope>BIOPHYSICOCHEMICAL PROPERTIES</scope>
    <scope>PATHWAY</scope>
</reference>
<organism>
    <name type="scientific">Escherichia coli (strain K12)</name>
    <dbReference type="NCBI Taxonomy" id="83333"/>
    <lineage>
        <taxon>Bacteria</taxon>
        <taxon>Pseudomonadati</taxon>
        <taxon>Pseudomonadota</taxon>
        <taxon>Gammaproteobacteria</taxon>
        <taxon>Enterobacterales</taxon>
        <taxon>Enterobacteriaceae</taxon>
        <taxon>Escherichia</taxon>
    </lineage>
</organism>
<evidence type="ECO:0000250" key="1"/>
<evidence type="ECO:0000255" key="2">
    <source>
        <dbReference type="PROSITE-ProRule" id="PRU00257"/>
    </source>
</evidence>
<evidence type="ECO:0000269" key="3">
    <source>
    </source>
</evidence>
<evidence type="ECO:0000305" key="4"/>
<evidence type="ECO:0007829" key="5">
    <source>
        <dbReference type="PDB" id="8X7F"/>
    </source>
</evidence>
<dbReference type="EC" id="2.7.7.1" evidence="3"/>
<dbReference type="EC" id="2.7.1.22"/>
<dbReference type="EMBL" id="U14003">
    <property type="protein sequence ID" value="AAA97286.1"/>
    <property type="status" value="ALT_INIT"/>
    <property type="molecule type" value="Genomic_DNA"/>
</dbReference>
<dbReference type="EMBL" id="U00096">
    <property type="protein sequence ID" value="AAC77343.2"/>
    <property type="molecule type" value="Genomic_DNA"/>
</dbReference>
<dbReference type="EMBL" id="AP009048">
    <property type="protein sequence ID" value="BAE78379.1"/>
    <property type="molecule type" value="Genomic_DNA"/>
</dbReference>
<dbReference type="EMBL" id="X63155">
    <property type="status" value="NOT_ANNOTATED_CDS"/>
    <property type="molecule type" value="Genomic_DNA"/>
</dbReference>
<dbReference type="PIR" id="S56614">
    <property type="entry name" value="S56614"/>
</dbReference>
<dbReference type="RefSeq" id="NP_418807.4">
    <property type="nucleotide sequence ID" value="NC_000913.3"/>
</dbReference>
<dbReference type="RefSeq" id="WP_000093814.1">
    <property type="nucleotide sequence ID" value="NZ_LN832404.1"/>
</dbReference>
<dbReference type="PDB" id="8X7F">
    <property type="method" value="EM"/>
    <property type="resolution" value="2.66 A"/>
    <property type="chains" value="A/D/G/J=64-410"/>
</dbReference>
<dbReference type="PDBsum" id="8X7F"/>
<dbReference type="EMDB" id="EMD-38098"/>
<dbReference type="SMR" id="P27278"/>
<dbReference type="BioGRID" id="4260800">
    <property type="interactions" value="99"/>
</dbReference>
<dbReference type="FunCoup" id="P27278">
    <property type="interactions" value="25"/>
</dbReference>
<dbReference type="STRING" id="511145.b4390"/>
<dbReference type="MoonProt" id="P27278"/>
<dbReference type="jPOST" id="P27278"/>
<dbReference type="PaxDb" id="511145-b4390"/>
<dbReference type="EnsemblBacteria" id="AAC77343">
    <property type="protein sequence ID" value="AAC77343"/>
    <property type="gene ID" value="b4390"/>
</dbReference>
<dbReference type="GeneID" id="75169885"/>
<dbReference type="GeneID" id="948911"/>
<dbReference type="KEGG" id="ecj:JW5800"/>
<dbReference type="KEGG" id="eco:b4390"/>
<dbReference type="KEGG" id="ecoc:C3026_23720"/>
<dbReference type="PATRIC" id="fig|1411691.4.peg.2295"/>
<dbReference type="EchoBASE" id="EB1311"/>
<dbReference type="eggNOG" id="COG1056">
    <property type="taxonomic scope" value="Bacteria"/>
</dbReference>
<dbReference type="eggNOG" id="COG3172">
    <property type="taxonomic scope" value="Bacteria"/>
</dbReference>
<dbReference type="HOGENOM" id="CLU_052648_0_1_6"/>
<dbReference type="InParanoid" id="P27278"/>
<dbReference type="OMA" id="QDPFRYW"/>
<dbReference type="OrthoDB" id="3249147at2"/>
<dbReference type="PhylomeDB" id="P27278"/>
<dbReference type="BioCyc" id="EcoCyc:PD04413"/>
<dbReference type="BioCyc" id="MetaCyc:PD04413"/>
<dbReference type="SABIO-RK" id="P27278"/>
<dbReference type="UniPathway" id="UPA00253"/>
<dbReference type="UniPathway" id="UPA00253">
    <property type="reaction ID" value="UER00600"/>
</dbReference>
<dbReference type="PRO" id="PR:P27278"/>
<dbReference type="Proteomes" id="UP000000625">
    <property type="component" value="Chromosome"/>
</dbReference>
<dbReference type="GO" id="GO:1902503">
    <property type="term" value="C:adenylyltransferase complex"/>
    <property type="evidence" value="ECO:0000314"/>
    <property type="project" value="EcoCyc"/>
</dbReference>
<dbReference type="GO" id="GO:1902494">
    <property type="term" value="C:catalytic complex"/>
    <property type="evidence" value="ECO:0000314"/>
    <property type="project" value="UniProtKB"/>
</dbReference>
<dbReference type="GO" id="GO:0005737">
    <property type="term" value="C:cytoplasm"/>
    <property type="evidence" value="ECO:0007669"/>
    <property type="project" value="UniProtKB-SubCell"/>
</dbReference>
<dbReference type="GO" id="GO:0005886">
    <property type="term" value="C:plasma membrane"/>
    <property type="evidence" value="ECO:0007669"/>
    <property type="project" value="UniProtKB-SubCell"/>
</dbReference>
<dbReference type="GO" id="GO:0005524">
    <property type="term" value="F:ATP binding"/>
    <property type="evidence" value="ECO:0000314"/>
    <property type="project" value="CAFA"/>
</dbReference>
<dbReference type="GO" id="GO:0000987">
    <property type="term" value="F:cis-regulatory region sequence-specific DNA binding"/>
    <property type="evidence" value="ECO:0000314"/>
    <property type="project" value="EcoCyc"/>
</dbReference>
<dbReference type="GO" id="GO:0042802">
    <property type="term" value="F:identical protein binding"/>
    <property type="evidence" value="ECO:0000314"/>
    <property type="project" value="EcoCyc"/>
</dbReference>
<dbReference type="GO" id="GO:0000287">
    <property type="term" value="F:magnesium ion binding"/>
    <property type="evidence" value="ECO:0000314"/>
    <property type="project" value="EcoCyc"/>
</dbReference>
<dbReference type="GO" id="GO:0000309">
    <property type="term" value="F:nicotinamide-nucleotide adenylyltransferase activity"/>
    <property type="evidence" value="ECO:0000314"/>
    <property type="project" value="EcoCyc"/>
</dbReference>
<dbReference type="GO" id="GO:0050262">
    <property type="term" value="F:ribosylnicotinamide kinase activity"/>
    <property type="evidence" value="ECO:0007669"/>
    <property type="project" value="UniProtKB-EC"/>
</dbReference>
<dbReference type="GO" id="GO:0071248">
    <property type="term" value="P:cellular response to metal ion"/>
    <property type="evidence" value="ECO:0000314"/>
    <property type="project" value="CAFA"/>
</dbReference>
<dbReference type="GO" id="GO:0009435">
    <property type="term" value="P:NAD biosynthetic process"/>
    <property type="evidence" value="ECO:0000314"/>
    <property type="project" value="CAFA"/>
</dbReference>
<dbReference type="GO" id="GO:0051289">
    <property type="term" value="P:protein homotetramerization"/>
    <property type="evidence" value="ECO:0000314"/>
    <property type="project" value="EcoCyc"/>
</dbReference>
<dbReference type="GO" id="GO:0010446">
    <property type="term" value="P:response to alkaline pH"/>
    <property type="evidence" value="ECO:0000314"/>
    <property type="project" value="CAFA"/>
</dbReference>
<dbReference type="CDD" id="cd00093">
    <property type="entry name" value="HTH_XRE"/>
    <property type="match status" value="1"/>
</dbReference>
<dbReference type="CDD" id="cd02019">
    <property type="entry name" value="NK"/>
    <property type="match status" value="1"/>
</dbReference>
<dbReference type="CDD" id="cd02167">
    <property type="entry name" value="NMNAT_NadR"/>
    <property type="match status" value="1"/>
</dbReference>
<dbReference type="FunFam" id="1.10.260.40:FF:000020">
    <property type="entry name" value="Trifunctional nicotinamide-nucleotide adenylyltransferase/ribosylnicotinamide kinase/transcriptional regulator NadR"/>
    <property type="match status" value="1"/>
</dbReference>
<dbReference type="FunFam" id="3.40.50.300:FF:000672">
    <property type="entry name" value="Trifunctional nicotinamide-nucleotide adenylyltransferase/ribosylnicotinamide kinase/transcriptional regulator NadR"/>
    <property type="match status" value="1"/>
</dbReference>
<dbReference type="FunFam" id="3.40.50.620:FF:000091">
    <property type="entry name" value="Trifunctional nicotinamide-nucleotide adenylyltransferase/ribosylnicotinamide kinase/transcriptional regulator NadR"/>
    <property type="match status" value="1"/>
</dbReference>
<dbReference type="Gene3D" id="3.40.50.620">
    <property type="entry name" value="HUPs"/>
    <property type="match status" value="1"/>
</dbReference>
<dbReference type="Gene3D" id="1.10.260.40">
    <property type="entry name" value="lambda repressor-like DNA-binding domains"/>
    <property type="match status" value="1"/>
</dbReference>
<dbReference type="Gene3D" id="3.40.50.300">
    <property type="entry name" value="P-loop containing nucleotide triphosphate hydrolases"/>
    <property type="match status" value="1"/>
</dbReference>
<dbReference type="InterPro" id="IPR001387">
    <property type="entry name" value="Cro/C1-type_HTH"/>
</dbReference>
<dbReference type="InterPro" id="IPR004821">
    <property type="entry name" value="Cyt_trans-like"/>
</dbReference>
<dbReference type="InterPro" id="IPR010982">
    <property type="entry name" value="Lambda_DNA-bd_dom_sf"/>
</dbReference>
<dbReference type="InterPro" id="IPR052735">
    <property type="entry name" value="NAD_biosynth-regulator"/>
</dbReference>
<dbReference type="InterPro" id="IPR016429">
    <property type="entry name" value="NAD_NadR"/>
</dbReference>
<dbReference type="InterPro" id="IPR038727">
    <property type="entry name" value="NadR/Ttd14_AAA_dom"/>
</dbReference>
<dbReference type="InterPro" id="IPR006417">
    <property type="entry name" value="NadR_NMN_Atrans"/>
</dbReference>
<dbReference type="InterPro" id="IPR041749">
    <property type="entry name" value="NMNAT_NadR"/>
</dbReference>
<dbReference type="InterPro" id="IPR027417">
    <property type="entry name" value="P-loop_NTPase"/>
</dbReference>
<dbReference type="InterPro" id="IPR014729">
    <property type="entry name" value="Rossmann-like_a/b/a_fold"/>
</dbReference>
<dbReference type="NCBIfam" id="TIGR00125">
    <property type="entry name" value="cyt_tran_rel"/>
    <property type="match status" value="1"/>
</dbReference>
<dbReference type="NCBIfam" id="TIGR01526">
    <property type="entry name" value="nadR_NMN_Atrans"/>
    <property type="match status" value="1"/>
</dbReference>
<dbReference type="NCBIfam" id="NF005988">
    <property type="entry name" value="PRK08099.1"/>
    <property type="match status" value="1"/>
</dbReference>
<dbReference type="PANTHER" id="PTHR37512:SF1">
    <property type="entry name" value="NADR_TTD14 AAA DOMAIN-CONTAINING PROTEIN"/>
    <property type="match status" value="1"/>
</dbReference>
<dbReference type="PANTHER" id="PTHR37512">
    <property type="entry name" value="TRIFUNCTIONAL NAD BIOSYNTHESIS/REGULATOR PROTEIN NADR"/>
    <property type="match status" value="1"/>
</dbReference>
<dbReference type="Pfam" id="PF13521">
    <property type="entry name" value="AAA_28"/>
    <property type="match status" value="1"/>
</dbReference>
<dbReference type="Pfam" id="PF01381">
    <property type="entry name" value="HTH_3"/>
    <property type="match status" value="1"/>
</dbReference>
<dbReference type="PIRSF" id="PIRSF004776">
    <property type="entry name" value="NadR_NMNAT/RNK"/>
    <property type="match status" value="1"/>
</dbReference>
<dbReference type="SMART" id="SM00530">
    <property type="entry name" value="HTH_XRE"/>
    <property type="match status" value="1"/>
</dbReference>
<dbReference type="SUPFAM" id="SSF47413">
    <property type="entry name" value="lambda repressor-like DNA-binding domains"/>
    <property type="match status" value="1"/>
</dbReference>
<dbReference type="SUPFAM" id="SSF52374">
    <property type="entry name" value="Nucleotidylyl transferase"/>
    <property type="match status" value="1"/>
</dbReference>
<dbReference type="SUPFAM" id="SSF52540">
    <property type="entry name" value="P-loop containing nucleoside triphosphate hydrolases"/>
    <property type="match status" value="1"/>
</dbReference>
<dbReference type="PROSITE" id="PS50943">
    <property type="entry name" value="HTH_CROC1"/>
    <property type="match status" value="1"/>
</dbReference>
<keyword id="KW-0002">3D-structure</keyword>
<keyword id="KW-0067">ATP-binding</keyword>
<keyword id="KW-1003">Cell membrane</keyword>
<keyword id="KW-0963">Cytoplasm</keyword>
<keyword id="KW-0238">DNA-binding</keyword>
<keyword id="KW-0418">Kinase</keyword>
<keyword id="KW-0472">Membrane</keyword>
<keyword id="KW-0511">Multifunctional enzyme</keyword>
<keyword id="KW-0520">NAD</keyword>
<keyword id="KW-0547">Nucleotide-binding</keyword>
<keyword id="KW-0662">Pyridine nucleotide biosynthesis</keyword>
<keyword id="KW-1185">Reference proteome</keyword>
<keyword id="KW-0678">Repressor</keyword>
<keyword id="KW-0804">Transcription</keyword>
<keyword id="KW-0805">Transcription regulation</keyword>
<keyword id="KW-0808">Transferase</keyword>
<comment type="function">
    <text evidence="3">This enzyme has three activities: DNA binding, nicotinamide mononucleotide (NMN) adenylyltransferase and ribosylnicotinamide (RN) kinase. The DNA-binding domain binds to the nadB operator sequence in an NAD- and ATP-dependent manner. As NAD levels increase within the cell, the affinity of NadR for the nadB operator regions of nadA, nadB, and pncB increases, repressing the transcription of these genes. The RN kinase activity catalyzes the phosphorylation of RN to form nicotinamide ribonucleotide. The NMN adenylyltransferase activity catalyzes the transfer of the AMP moiety of ATP to nicotinamide ribonucleotide to form NAD(+). The NMN adenylyltransferase domain also functions as the NAD and ATP sensor.</text>
</comment>
<comment type="catalytic activity">
    <reaction evidence="3">
        <text>beta-nicotinamide D-ribonucleotide + ATP + H(+) = diphosphate + NAD(+)</text>
        <dbReference type="Rhea" id="RHEA:21360"/>
        <dbReference type="ChEBI" id="CHEBI:14649"/>
        <dbReference type="ChEBI" id="CHEBI:15378"/>
        <dbReference type="ChEBI" id="CHEBI:30616"/>
        <dbReference type="ChEBI" id="CHEBI:33019"/>
        <dbReference type="ChEBI" id="CHEBI:57540"/>
        <dbReference type="EC" id="2.7.7.1"/>
    </reaction>
    <physiologicalReaction direction="left-to-right" evidence="3">
        <dbReference type="Rhea" id="RHEA:21361"/>
    </physiologicalReaction>
</comment>
<comment type="catalytic activity">
    <reaction>
        <text>beta-nicotinamide D-riboside + ATP = beta-nicotinamide D-ribonucleotide + ADP + H(+)</text>
        <dbReference type="Rhea" id="RHEA:14017"/>
        <dbReference type="ChEBI" id="CHEBI:14649"/>
        <dbReference type="ChEBI" id="CHEBI:15378"/>
        <dbReference type="ChEBI" id="CHEBI:15927"/>
        <dbReference type="ChEBI" id="CHEBI:30616"/>
        <dbReference type="ChEBI" id="CHEBI:456216"/>
        <dbReference type="EC" id="2.7.1.22"/>
    </reaction>
</comment>
<comment type="activity regulation">
    <text evidence="1">Feed-back regulated by NAD. A high level of NAD causes NadR to lose enzymatic activity and repress several NAD synthetic genes; conversely, a low NAD level activates the assimilatory enzymatic activities and leads to derepression of biosynthetic genes (By similarity).</text>
</comment>
<comment type="biophysicochemical properties">
    <kinetics>
        <KM evidence="3">0.7 mM for NMN</KM>
        <KM evidence="3">1.7 uM for ATP</KM>
    </kinetics>
    <phDependence>
        <text evidence="3">Optimum pH is 8.6.</text>
    </phDependence>
</comment>
<comment type="pathway">
    <text>Cofactor biosynthesis; NAD(+) biosynthesis [regulation].</text>
</comment>
<comment type="pathway">
    <text evidence="3">Cofactor biosynthesis; NAD(+) biosynthesis; NAD(+) from nicotinamide D-ribonucleotide: step 1/1.</text>
</comment>
<comment type="subunit">
    <text evidence="1">Homotetramer.</text>
</comment>
<comment type="subcellular location">
    <subcellularLocation>
        <location>Cell membrane</location>
        <topology>Peripheral membrane protein</topology>
    </subcellularLocation>
    <subcellularLocation>
        <location evidence="1">Cytoplasm</location>
    </subcellularLocation>
</comment>
<comment type="similarity">
    <text evidence="4">In the central section; belongs to the bacterial NMN adenylyltransferase family.</text>
</comment>
<comment type="similarity">
    <text evidence="4">In the C-terminal section; belongs to the bacterial RNK family.</text>
</comment>
<comment type="sequence caution" evidence="4">
    <conflict type="erroneous initiation">
        <sequence resource="EMBL-CDS" id="AAA97286"/>
    </conflict>
    <text>Extended N-terminus.</text>
</comment>
<accession>P27278</accession>
<accession>P76819</accession>
<accession>Q2M5S7</accession>
<gene>
    <name type="primary">nadR</name>
    <name type="synonym">nadI</name>
    <name type="ordered locus">b4390</name>
    <name type="ordered locus">JW5800</name>
</gene>